<gene>
    <name evidence="6 9" type="primary">cox7a1</name>
    <name evidence="7" type="ORF">zgc:153177</name>
</gene>
<accession>Q08CE7</accession>
<accession>A0A8M1NVX5</accession>
<evidence type="ECO:0000250" key="1">
    <source>
        <dbReference type="UniProtKB" id="P07470"/>
    </source>
</evidence>
<evidence type="ECO:0000250" key="2">
    <source>
        <dbReference type="UniProtKB" id="P10174"/>
    </source>
</evidence>
<evidence type="ECO:0000250" key="3">
    <source>
        <dbReference type="UniProtKB" id="P56392"/>
    </source>
</evidence>
<evidence type="ECO:0000255" key="4"/>
<evidence type="ECO:0000269" key="5">
    <source>
    </source>
</evidence>
<evidence type="ECO:0000303" key="6">
    <source>
    </source>
</evidence>
<evidence type="ECO:0000303" key="7">
    <source ref="2"/>
</evidence>
<evidence type="ECO:0000305" key="8"/>
<evidence type="ECO:0000312" key="9">
    <source>
        <dbReference type="ZFIN" id="ZDB-GENE-060929-340"/>
    </source>
</evidence>
<feature type="transit peptide" description="Mitochondrion" evidence="1">
    <location>
        <begin position="1"/>
        <end position="21"/>
    </location>
</feature>
<feature type="chain" id="PRO_0000461463" description="Cytochrome c oxidase subunit 7A1, mitochondrial">
    <location>
        <begin position="22"/>
        <end position="81"/>
    </location>
</feature>
<feature type="transmembrane region" description="Helical" evidence="4">
    <location>
        <begin position="51"/>
        <end position="72"/>
    </location>
</feature>
<sequence>MRHLLGLPQLASRAFSTTVRQMKNRVPEKQKIFLEDNGLPVHIKGGTTDAILYRLTMTLTVVGTGYSLYWLLIAAMPKRKA</sequence>
<organism>
    <name type="scientific">Danio rerio</name>
    <name type="common">Zebrafish</name>
    <name type="synonym">Brachydanio rerio</name>
    <dbReference type="NCBI Taxonomy" id="7955"/>
    <lineage>
        <taxon>Eukaryota</taxon>
        <taxon>Metazoa</taxon>
        <taxon>Chordata</taxon>
        <taxon>Craniata</taxon>
        <taxon>Vertebrata</taxon>
        <taxon>Euteleostomi</taxon>
        <taxon>Actinopterygii</taxon>
        <taxon>Neopterygii</taxon>
        <taxon>Teleostei</taxon>
        <taxon>Ostariophysi</taxon>
        <taxon>Cypriniformes</taxon>
        <taxon>Danionidae</taxon>
        <taxon>Danioninae</taxon>
        <taxon>Danio</taxon>
    </lineage>
</organism>
<name>CX7A1_DANRE</name>
<protein>
    <recommendedName>
        <fullName evidence="6">Cytochrome c oxidase subunit 7A1, mitochondrial</fullName>
    </recommendedName>
</protein>
<keyword id="KW-0472">Membrane</keyword>
<keyword id="KW-0496">Mitochondrion</keyword>
<keyword id="KW-0999">Mitochondrion inner membrane</keyword>
<keyword id="KW-0560">Oxidoreductase</keyword>
<keyword id="KW-1185">Reference proteome</keyword>
<keyword id="KW-0809">Transit peptide</keyword>
<keyword id="KW-0812">Transmembrane</keyword>
<keyword id="KW-1133">Transmembrane helix</keyword>
<dbReference type="EMBL" id="AL935335">
    <property type="status" value="NOT_ANNOTATED_CDS"/>
    <property type="molecule type" value="Genomic_DNA"/>
</dbReference>
<dbReference type="EMBL" id="CR626887">
    <property type="status" value="NOT_ANNOTATED_CDS"/>
    <property type="molecule type" value="Genomic_DNA"/>
</dbReference>
<dbReference type="EMBL" id="BC124269">
    <property type="protein sequence ID" value="AAI24270.1"/>
    <property type="molecule type" value="mRNA"/>
</dbReference>
<dbReference type="RefSeq" id="NP_001166149.1">
    <property type="nucleotide sequence ID" value="NM_001172678.1"/>
</dbReference>
<dbReference type="SMR" id="Q08CE7"/>
<dbReference type="FunCoup" id="Q08CE7">
    <property type="interactions" value="1"/>
</dbReference>
<dbReference type="STRING" id="7955.ENSDARP00000122388"/>
<dbReference type="PaxDb" id="7955-ENSDARP00000091902"/>
<dbReference type="GeneID" id="767664"/>
<dbReference type="KEGG" id="dre:767664"/>
<dbReference type="AGR" id="ZFIN:ZDB-GENE-060929-340"/>
<dbReference type="CTD" id="1346"/>
<dbReference type="ZFIN" id="ZDB-GENE-060929-340">
    <property type="gene designation" value="cox7a1"/>
</dbReference>
<dbReference type="eggNOG" id="ENOG502SFWI">
    <property type="taxonomic scope" value="Eukaryota"/>
</dbReference>
<dbReference type="OMA" id="AGTCYSI"/>
<dbReference type="OrthoDB" id="5966508at2759"/>
<dbReference type="Reactome" id="R-DRE-5628897">
    <property type="pathway name" value="TP53 Regulates Metabolic Genes"/>
</dbReference>
<dbReference type="Reactome" id="R-DRE-611105">
    <property type="pathway name" value="Respiratory electron transport"/>
</dbReference>
<dbReference type="Reactome" id="R-DRE-9707564">
    <property type="pathway name" value="Cytoprotection by HMOX1"/>
</dbReference>
<dbReference type="UniPathway" id="UPA00705"/>
<dbReference type="Proteomes" id="UP000000437">
    <property type="component" value="Alternate scaffold 15"/>
</dbReference>
<dbReference type="Proteomes" id="UP000000437">
    <property type="component" value="Chromosome 15"/>
</dbReference>
<dbReference type="Bgee" id="ENSDARG00000069464">
    <property type="expression patterns" value="Expressed in heart and 20 other cell types or tissues"/>
</dbReference>
<dbReference type="ExpressionAtlas" id="Q08CE7">
    <property type="expression patterns" value="differential"/>
</dbReference>
<dbReference type="GO" id="GO:0005743">
    <property type="term" value="C:mitochondrial inner membrane"/>
    <property type="evidence" value="ECO:0007669"/>
    <property type="project" value="UniProtKB-SubCell"/>
</dbReference>
<dbReference type="GO" id="GO:0098803">
    <property type="term" value="C:respiratory chain complex"/>
    <property type="evidence" value="ECO:0000318"/>
    <property type="project" value="GO_Central"/>
</dbReference>
<dbReference type="GO" id="GO:0045277">
    <property type="term" value="C:respiratory chain complex IV"/>
    <property type="evidence" value="ECO:0000315"/>
    <property type="project" value="UniProtKB"/>
</dbReference>
<dbReference type="GO" id="GO:0016491">
    <property type="term" value="F:oxidoreductase activity"/>
    <property type="evidence" value="ECO:0007669"/>
    <property type="project" value="UniProtKB-KW"/>
</dbReference>
<dbReference type="GO" id="GO:0006123">
    <property type="term" value="P:mitochondrial electron transport, cytochrome c to oxygen"/>
    <property type="evidence" value="ECO:0007669"/>
    <property type="project" value="InterPro"/>
</dbReference>
<dbReference type="GO" id="GO:0097250">
    <property type="term" value="P:mitochondrial respirasome assembly"/>
    <property type="evidence" value="ECO:0000315"/>
    <property type="project" value="UniProtKB"/>
</dbReference>
<dbReference type="GO" id="GO:0002082">
    <property type="term" value="P:regulation of oxidative phosphorylation"/>
    <property type="evidence" value="ECO:0000315"/>
    <property type="project" value="UniProtKB"/>
</dbReference>
<dbReference type="CDD" id="cd00928">
    <property type="entry name" value="Cyt_c_Oxidase_VIIa"/>
    <property type="match status" value="1"/>
</dbReference>
<dbReference type="FunFam" id="4.10.91.10:FF:000001">
    <property type="entry name" value="Cytochrome c oxidase subunit 7A1, mitochondrial"/>
    <property type="match status" value="1"/>
</dbReference>
<dbReference type="Gene3D" id="4.10.91.10">
    <property type="entry name" value="Cytochrome c oxidase, subunit VIIa"/>
    <property type="match status" value="1"/>
</dbReference>
<dbReference type="InterPro" id="IPR039297">
    <property type="entry name" value="COX7a"/>
</dbReference>
<dbReference type="InterPro" id="IPR036539">
    <property type="entry name" value="Cyt_c_oxidase_su7a_sf"/>
</dbReference>
<dbReference type="InterPro" id="IPR003177">
    <property type="entry name" value="Cytc_oxidase_su7a_met"/>
</dbReference>
<dbReference type="PANTHER" id="PTHR10510">
    <property type="entry name" value="CYTOCHROME C OXIDASE POLYPEPTIDE 7A"/>
    <property type="match status" value="1"/>
</dbReference>
<dbReference type="PANTHER" id="PTHR10510:SF5">
    <property type="entry name" value="CYTOCHROME C OXIDASE SUBUNIT 7A1, MITOCHONDRIAL"/>
    <property type="match status" value="1"/>
</dbReference>
<dbReference type="Pfam" id="PF02238">
    <property type="entry name" value="COX7a"/>
    <property type="match status" value="1"/>
</dbReference>
<dbReference type="SUPFAM" id="SSF81419">
    <property type="entry name" value="Mitochondrial cytochrome c oxidase subunit VIIa"/>
    <property type="match status" value="1"/>
</dbReference>
<proteinExistence type="evidence at protein level"/>
<reference key="1">
    <citation type="journal article" date="2013" name="Nature">
        <title>The zebrafish reference genome sequence and its relationship to the human genome.</title>
        <authorList>
            <person name="Howe K."/>
            <person name="Clark M.D."/>
            <person name="Torroja C.F."/>
            <person name="Torrance J."/>
            <person name="Berthelot C."/>
            <person name="Muffato M."/>
            <person name="Collins J.E."/>
            <person name="Humphray S."/>
            <person name="McLaren K."/>
            <person name="Matthews L."/>
            <person name="McLaren S."/>
            <person name="Sealy I."/>
            <person name="Caccamo M."/>
            <person name="Churcher C."/>
            <person name="Scott C."/>
            <person name="Barrett J.C."/>
            <person name="Koch R."/>
            <person name="Rauch G.J."/>
            <person name="White S."/>
            <person name="Chow W."/>
            <person name="Kilian B."/>
            <person name="Quintais L.T."/>
            <person name="Guerra-Assuncao J.A."/>
            <person name="Zhou Y."/>
            <person name="Gu Y."/>
            <person name="Yen J."/>
            <person name="Vogel J.H."/>
            <person name="Eyre T."/>
            <person name="Redmond S."/>
            <person name="Banerjee R."/>
            <person name="Chi J."/>
            <person name="Fu B."/>
            <person name="Langley E."/>
            <person name="Maguire S.F."/>
            <person name="Laird G.K."/>
            <person name="Lloyd D."/>
            <person name="Kenyon E."/>
            <person name="Donaldson S."/>
            <person name="Sehra H."/>
            <person name="Almeida-King J."/>
            <person name="Loveland J."/>
            <person name="Trevanion S."/>
            <person name="Jones M."/>
            <person name="Quail M."/>
            <person name="Willey D."/>
            <person name="Hunt A."/>
            <person name="Burton J."/>
            <person name="Sims S."/>
            <person name="McLay K."/>
            <person name="Plumb B."/>
            <person name="Davis J."/>
            <person name="Clee C."/>
            <person name="Oliver K."/>
            <person name="Clark R."/>
            <person name="Riddle C."/>
            <person name="Elliot D."/>
            <person name="Threadgold G."/>
            <person name="Harden G."/>
            <person name="Ware D."/>
            <person name="Begum S."/>
            <person name="Mortimore B."/>
            <person name="Kerry G."/>
            <person name="Heath P."/>
            <person name="Phillimore B."/>
            <person name="Tracey A."/>
            <person name="Corby N."/>
            <person name="Dunn M."/>
            <person name="Johnson C."/>
            <person name="Wood J."/>
            <person name="Clark S."/>
            <person name="Pelan S."/>
            <person name="Griffiths G."/>
            <person name="Smith M."/>
            <person name="Glithero R."/>
            <person name="Howden P."/>
            <person name="Barker N."/>
            <person name="Lloyd C."/>
            <person name="Stevens C."/>
            <person name="Harley J."/>
            <person name="Holt K."/>
            <person name="Panagiotidis G."/>
            <person name="Lovell J."/>
            <person name="Beasley H."/>
            <person name="Henderson C."/>
            <person name="Gordon D."/>
            <person name="Auger K."/>
            <person name="Wright D."/>
            <person name="Collins J."/>
            <person name="Raisen C."/>
            <person name="Dyer L."/>
            <person name="Leung K."/>
            <person name="Robertson L."/>
            <person name="Ambridge K."/>
            <person name="Leongamornlert D."/>
            <person name="McGuire S."/>
            <person name="Gilderthorp R."/>
            <person name="Griffiths C."/>
            <person name="Manthravadi D."/>
            <person name="Nichol S."/>
            <person name="Barker G."/>
            <person name="Whitehead S."/>
            <person name="Kay M."/>
            <person name="Brown J."/>
            <person name="Murnane C."/>
            <person name="Gray E."/>
            <person name="Humphries M."/>
            <person name="Sycamore N."/>
            <person name="Barker D."/>
            <person name="Saunders D."/>
            <person name="Wallis J."/>
            <person name="Babbage A."/>
            <person name="Hammond S."/>
            <person name="Mashreghi-Mohammadi M."/>
            <person name="Barr L."/>
            <person name="Martin S."/>
            <person name="Wray P."/>
            <person name="Ellington A."/>
            <person name="Matthews N."/>
            <person name="Ellwood M."/>
            <person name="Woodmansey R."/>
            <person name="Clark G."/>
            <person name="Cooper J."/>
            <person name="Tromans A."/>
            <person name="Grafham D."/>
            <person name="Skuce C."/>
            <person name="Pandian R."/>
            <person name="Andrews R."/>
            <person name="Harrison E."/>
            <person name="Kimberley A."/>
            <person name="Garnett J."/>
            <person name="Fosker N."/>
            <person name="Hall R."/>
            <person name="Garner P."/>
            <person name="Kelly D."/>
            <person name="Bird C."/>
            <person name="Palmer S."/>
            <person name="Gehring I."/>
            <person name="Berger A."/>
            <person name="Dooley C.M."/>
            <person name="Ersan-Urun Z."/>
            <person name="Eser C."/>
            <person name="Geiger H."/>
            <person name="Geisler M."/>
            <person name="Karotki L."/>
            <person name="Kirn A."/>
            <person name="Konantz J."/>
            <person name="Konantz M."/>
            <person name="Oberlander M."/>
            <person name="Rudolph-Geiger S."/>
            <person name="Teucke M."/>
            <person name="Lanz C."/>
            <person name="Raddatz G."/>
            <person name="Osoegawa K."/>
            <person name="Zhu B."/>
            <person name="Rapp A."/>
            <person name="Widaa S."/>
            <person name="Langford C."/>
            <person name="Yang F."/>
            <person name="Schuster S.C."/>
            <person name="Carter N.P."/>
            <person name="Harrow J."/>
            <person name="Ning Z."/>
            <person name="Herrero J."/>
            <person name="Searle S.M."/>
            <person name="Enright A."/>
            <person name="Geisler R."/>
            <person name="Plasterk R.H."/>
            <person name="Lee C."/>
            <person name="Westerfield M."/>
            <person name="de Jong P.J."/>
            <person name="Zon L.I."/>
            <person name="Postlethwait J.H."/>
            <person name="Nusslein-Volhard C."/>
            <person name="Hubbard T.J."/>
            <person name="Roest Crollius H."/>
            <person name="Rogers J."/>
            <person name="Stemple D.L."/>
        </authorList>
    </citation>
    <scope>NUCLEOTIDE SEQUENCE [LARGE SCALE GENOMIC DNA]</scope>
    <source>
        <strain>Tuebingen</strain>
    </source>
</reference>
<reference key="2">
    <citation type="submission" date="2006-09" db="EMBL/GenBank/DDBJ databases">
        <authorList>
            <consortium name="NIH - Zebrafish Gene Collection (ZGC) project"/>
        </authorList>
    </citation>
    <scope>NUCLEOTIDE SEQUENCE [LARGE SCALE MRNA]</scope>
    <source>
        <tissue>Heart</tissue>
    </source>
</reference>
<reference key="3">
    <citation type="journal article" date="2024" name="Dev. Cell">
        <title>Cox7a1 controls skeletal muscle physiology and heart regeneration through complex IV dimerization.</title>
        <authorList>
            <person name="Garcia-Poyatos C."/>
            <person name="Arora P."/>
            <person name="Calvo E."/>
            <person name="Marques I.J."/>
            <person name="Kirschke N."/>
            <person name="Galardi-Castilla M."/>
            <person name="Lembke C."/>
            <person name="Meer M."/>
            <person name="Fernandez-Montes P."/>
            <person name="Ernst A."/>
            <person name="Haberthuer D."/>
            <person name="Hlushchuk R."/>
            <person name="Vazquez J."/>
            <person name="Vermathen P."/>
            <person name="Enriquez J.A."/>
            <person name="Mercader N."/>
        </authorList>
    </citation>
    <scope>FUNCTION</scope>
    <scope>SUBUNIT</scope>
    <scope>DISRUPTION PHENOTYPE</scope>
</reference>
<comment type="function">
    <text evidence="2 5">Component of the mitochondrial respiratory complex IV (CIV, also named cytochrome c oxidase complex), the last enzyme in the mitochondrial electron transport chain which drives oxidative phosphorylation (PubMed:38701784). The CIV complex is the component of the respiratory chain that catalyzes the reduction of oxygen to water (By similarity). Acts as an assembly factor that specifically drives the homodimerization of CIV complexes, mediating the formation of mitochondrial respiratory supercomplexes (respirasomes) containing two CIV: supercomplxes with two molecules of CIV show improved activity (PubMed:38701784).</text>
</comment>
<comment type="pathway">
    <text evidence="3">Energy metabolism; oxidative phosphorylation.</text>
</comment>
<comment type="subunit">
    <text evidence="1 5">Component of the complex IV (CIV, cytochrome c oxidase) (By similarity). The complex exists as a monomer or a dimer and forms supercomplexes (SCs) in the inner mitochondrial membrane with NADH-ubiquinone oxidoreductase (complex I, CI) and ubiquinol-cytochrome c oxidoreductase (cytochrome b-c1 complex, complex III, CIII), resulting in different assemblies (supercomplex SCI(1)III(2)IV(1) and megacomplex MCI(2)III(2)IV(2)) (PubMed:38701784).</text>
</comment>
<comment type="subcellular location">
    <subcellularLocation>
        <location evidence="1">Mitochondrion inner membrane</location>
        <topology evidence="4">Single-pass membrane protein</topology>
    </subcellularLocation>
</comment>
<comment type="disruption phenotype">
    <text evidence="5">Reduced body weight due to diminished lateral muscle mass, leading to reduced swimming capacity (PubMed:38701784). Mitochondria show reduced formation of mitochondrial respiratory supercomplexes with CIV dimers, leading to metabolic alterations and non-pathological muscle performance decline (PubMed:38701784).</text>
</comment>
<comment type="similarity">
    <text evidence="8">Belongs to the cytochrome c oxidase VIIa family.</text>
</comment>